<sequence>MLSDELKLLVGLGNPGTEYEKTRHNVGFMVLEEIARKNNCSFRESKKIFGRTCEYGSGIEKTRLLMPNTYMNESGKSVRLAKDWFNFQNNQLIVLVDDMDLPLGKIRVRSKGSSGGHNGLKSIINHLGTAEFKRLKIGIGAPSNDQQERKSKTVSHVLGRFSKEEFIILNFIIQEIISCIESITSNNWEKISTRLNSYKPDN</sequence>
<gene>
    <name evidence="1" type="primary">pth</name>
    <name type="ordered locus">NATL1_03281</name>
</gene>
<proteinExistence type="inferred from homology"/>
<dbReference type="EC" id="3.1.1.29" evidence="1"/>
<dbReference type="EMBL" id="CP000553">
    <property type="protein sequence ID" value="ABM74892.1"/>
    <property type="molecule type" value="Genomic_DNA"/>
</dbReference>
<dbReference type="RefSeq" id="WP_011823101.1">
    <property type="nucleotide sequence ID" value="NC_008819.1"/>
</dbReference>
<dbReference type="SMR" id="A2C082"/>
<dbReference type="KEGG" id="pme:NATL1_03281"/>
<dbReference type="eggNOG" id="COG0193">
    <property type="taxonomic scope" value="Bacteria"/>
</dbReference>
<dbReference type="HOGENOM" id="CLU_062456_4_1_3"/>
<dbReference type="Proteomes" id="UP000002592">
    <property type="component" value="Chromosome"/>
</dbReference>
<dbReference type="GO" id="GO:0005737">
    <property type="term" value="C:cytoplasm"/>
    <property type="evidence" value="ECO:0007669"/>
    <property type="project" value="UniProtKB-SubCell"/>
</dbReference>
<dbReference type="GO" id="GO:0004045">
    <property type="term" value="F:peptidyl-tRNA hydrolase activity"/>
    <property type="evidence" value="ECO:0007669"/>
    <property type="project" value="UniProtKB-UniRule"/>
</dbReference>
<dbReference type="GO" id="GO:0000049">
    <property type="term" value="F:tRNA binding"/>
    <property type="evidence" value="ECO:0007669"/>
    <property type="project" value="UniProtKB-UniRule"/>
</dbReference>
<dbReference type="GO" id="GO:0006515">
    <property type="term" value="P:protein quality control for misfolded or incompletely synthesized proteins"/>
    <property type="evidence" value="ECO:0007669"/>
    <property type="project" value="UniProtKB-UniRule"/>
</dbReference>
<dbReference type="GO" id="GO:0072344">
    <property type="term" value="P:rescue of stalled ribosome"/>
    <property type="evidence" value="ECO:0007669"/>
    <property type="project" value="UniProtKB-UniRule"/>
</dbReference>
<dbReference type="CDD" id="cd00462">
    <property type="entry name" value="PTH"/>
    <property type="match status" value="1"/>
</dbReference>
<dbReference type="FunFam" id="3.40.50.1470:FF:000001">
    <property type="entry name" value="Peptidyl-tRNA hydrolase"/>
    <property type="match status" value="1"/>
</dbReference>
<dbReference type="Gene3D" id="3.40.50.1470">
    <property type="entry name" value="Peptidyl-tRNA hydrolase"/>
    <property type="match status" value="1"/>
</dbReference>
<dbReference type="HAMAP" id="MF_00083">
    <property type="entry name" value="Pept_tRNA_hydro_bact"/>
    <property type="match status" value="1"/>
</dbReference>
<dbReference type="InterPro" id="IPR001328">
    <property type="entry name" value="Pept_tRNA_hydro"/>
</dbReference>
<dbReference type="InterPro" id="IPR018171">
    <property type="entry name" value="Pept_tRNA_hydro_CS"/>
</dbReference>
<dbReference type="InterPro" id="IPR036416">
    <property type="entry name" value="Pept_tRNA_hydro_sf"/>
</dbReference>
<dbReference type="NCBIfam" id="TIGR00447">
    <property type="entry name" value="pth"/>
    <property type="match status" value="1"/>
</dbReference>
<dbReference type="PANTHER" id="PTHR17224">
    <property type="entry name" value="PEPTIDYL-TRNA HYDROLASE"/>
    <property type="match status" value="1"/>
</dbReference>
<dbReference type="PANTHER" id="PTHR17224:SF1">
    <property type="entry name" value="PEPTIDYL-TRNA HYDROLASE"/>
    <property type="match status" value="1"/>
</dbReference>
<dbReference type="Pfam" id="PF01195">
    <property type="entry name" value="Pept_tRNA_hydro"/>
    <property type="match status" value="1"/>
</dbReference>
<dbReference type="SUPFAM" id="SSF53178">
    <property type="entry name" value="Peptidyl-tRNA hydrolase-like"/>
    <property type="match status" value="1"/>
</dbReference>
<dbReference type="PROSITE" id="PS01195">
    <property type="entry name" value="PEPT_TRNA_HYDROL_1"/>
    <property type="match status" value="1"/>
</dbReference>
<dbReference type="PROSITE" id="PS01196">
    <property type="entry name" value="PEPT_TRNA_HYDROL_2"/>
    <property type="match status" value="1"/>
</dbReference>
<name>PTH_PROM1</name>
<comment type="function">
    <text evidence="1">Hydrolyzes ribosome-free peptidyl-tRNAs (with 1 or more amino acids incorporated), which drop off the ribosome during protein synthesis, or as a result of ribosome stalling.</text>
</comment>
<comment type="function">
    <text evidence="1">Catalyzes the release of premature peptidyl moieties from peptidyl-tRNA molecules trapped in stalled 50S ribosomal subunits, and thus maintains levels of free tRNAs and 50S ribosomes.</text>
</comment>
<comment type="catalytic activity">
    <reaction evidence="1">
        <text>an N-acyl-L-alpha-aminoacyl-tRNA + H2O = an N-acyl-L-amino acid + a tRNA + H(+)</text>
        <dbReference type="Rhea" id="RHEA:54448"/>
        <dbReference type="Rhea" id="RHEA-COMP:10123"/>
        <dbReference type="Rhea" id="RHEA-COMP:13883"/>
        <dbReference type="ChEBI" id="CHEBI:15377"/>
        <dbReference type="ChEBI" id="CHEBI:15378"/>
        <dbReference type="ChEBI" id="CHEBI:59874"/>
        <dbReference type="ChEBI" id="CHEBI:78442"/>
        <dbReference type="ChEBI" id="CHEBI:138191"/>
        <dbReference type="EC" id="3.1.1.29"/>
    </reaction>
</comment>
<comment type="subunit">
    <text evidence="1">Monomer.</text>
</comment>
<comment type="subcellular location">
    <subcellularLocation>
        <location evidence="1">Cytoplasm</location>
    </subcellularLocation>
</comment>
<comment type="similarity">
    <text evidence="1">Belongs to the PTH family.</text>
</comment>
<protein>
    <recommendedName>
        <fullName evidence="1">Peptidyl-tRNA hydrolase</fullName>
        <shortName evidence="1">Pth</shortName>
        <ecNumber evidence="1">3.1.1.29</ecNumber>
    </recommendedName>
</protein>
<evidence type="ECO:0000255" key="1">
    <source>
        <dbReference type="HAMAP-Rule" id="MF_00083"/>
    </source>
</evidence>
<accession>A2C082</accession>
<keyword id="KW-0963">Cytoplasm</keyword>
<keyword id="KW-0378">Hydrolase</keyword>
<keyword id="KW-0694">RNA-binding</keyword>
<keyword id="KW-0820">tRNA-binding</keyword>
<reference key="1">
    <citation type="journal article" date="2007" name="PLoS Genet.">
        <title>Patterns and implications of gene gain and loss in the evolution of Prochlorococcus.</title>
        <authorList>
            <person name="Kettler G.C."/>
            <person name="Martiny A.C."/>
            <person name="Huang K."/>
            <person name="Zucker J."/>
            <person name="Coleman M.L."/>
            <person name="Rodrigue S."/>
            <person name="Chen F."/>
            <person name="Lapidus A."/>
            <person name="Ferriera S."/>
            <person name="Johnson J."/>
            <person name="Steglich C."/>
            <person name="Church G.M."/>
            <person name="Richardson P."/>
            <person name="Chisholm S.W."/>
        </authorList>
    </citation>
    <scope>NUCLEOTIDE SEQUENCE [LARGE SCALE GENOMIC DNA]</scope>
    <source>
        <strain>NATL1A</strain>
    </source>
</reference>
<feature type="chain" id="PRO_1000010626" description="Peptidyl-tRNA hydrolase">
    <location>
        <begin position="1"/>
        <end position="202"/>
    </location>
</feature>
<feature type="active site" description="Proton acceptor" evidence="1">
    <location>
        <position position="24"/>
    </location>
</feature>
<feature type="binding site" evidence="1">
    <location>
        <position position="19"/>
    </location>
    <ligand>
        <name>tRNA</name>
        <dbReference type="ChEBI" id="CHEBI:17843"/>
    </ligand>
</feature>
<feature type="binding site" evidence="1">
    <location>
        <position position="70"/>
    </location>
    <ligand>
        <name>tRNA</name>
        <dbReference type="ChEBI" id="CHEBI:17843"/>
    </ligand>
</feature>
<feature type="binding site" evidence="1">
    <location>
        <position position="72"/>
    </location>
    <ligand>
        <name>tRNA</name>
        <dbReference type="ChEBI" id="CHEBI:17843"/>
    </ligand>
</feature>
<feature type="binding site" evidence="1">
    <location>
        <position position="118"/>
    </location>
    <ligand>
        <name>tRNA</name>
        <dbReference type="ChEBI" id="CHEBI:17843"/>
    </ligand>
</feature>
<feature type="site" description="Discriminates between blocked and unblocked aminoacyl-tRNA" evidence="1">
    <location>
        <position position="14"/>
    </location>
</feature>
<feature type="site" description="Stabilizes the basic form of H active site to accept a proton" evidence="1">
    <location>
        <position position="97"/>
    </location>
</feature>
<organism>
    <name type="scientific">Prochlorococcus marinus (strain NATL1A)</name>
    <dbReference type="NCBI Taxonomy" id="167555"/>
    <lineage>
        <taxon>Bacteria</taxon>
        <taxon>Bacillati</taxon>
        <taxon>Cyanobacteriota</taxon>
        <taxon>Cyanophyceae</taxon>
        <taxon>Synechococcales</taxon>
        <taxon>Prochlorococcaceae</taxon>
        <taxon>Prochlorococcus</taxon>
    </lineage>
</organism>